<comment type="function">
    <text evidence="3 5 6 7 8 9 10 11">Transcription activator; part of the qa gene cluster that mediates the catabolism of quinic acid (QA) and as such, allows the use of QA as a sole carbon source (PubMed:123642, PubMed:2525625, PubMed:6198093, PubMed:6458044). Activates the expression of qa cluster genes by binding to a 16 base-pair consensus sequence 5'-GGRTAARYRYTTAYCC-3' present in the promoters of the target genes (PubMed:2951591). Regulates its own expression (PubMed:2943985). May regulate the expression of many other genes inclusing genes with products in 8 mutually connected metabolic pathways: (1) starch and sucrose metabolism; (2) glycolysis/glucanogenesis; (3) TCA Cycle; (4) butanoate metabolism; (5) pyruvate metabolism; (6) aromatic amino acid and QA metabolism; (7) valine, leucine, and isoleucine degradation; and (8) transport of sugars and amino acids (PubMed:17597928, PubMed:21695121).</text>
</comment>
<comment type="subcellular location">
    <subcellularLocation>
        <location evidence="9">Nucleus</location>
    </subcellularLocation>
</comment>
<comment type="induction">
    <text evidence="4 5 8 11">Expression is induced in the presence of quinic acid (PubMed:17597928, PubMed:6458044). The expression of qa-lf appears to be autoregulated (PubMed:12477937, PubMed:2943985).</text>
</comment>
<sequence length="816" mass="88920">MPPKRKTLNAAAEANAHADGHADGNADGHVANTAASSNNARFADLTNIDTPGLGPTTTTLLVEPARSKRQRVSRACDQCRAAREKCDGIQPACFPCVSQGRSCTYQASPKKRGVQTGYIRTLELALAWMFENVARSEDALHNLLVRDAGQGSALLVGKDSPAAERLHARWATSRVNKSITRLLSGQAAQDPSEDGQSPSEDINVQDAGAKTSDFPHAPHLTFSAPKSSTAETRTLPGPVRPPISANTLENNLQPDGTGIGKLPPNHWRLLDIYFSYTHSWLPILEKKDMYQALYQYSEQGSLLPSANVESGVHAELWSALALASFQAAATAASSATGPASAAHGHDNAINPSPADISDTARKLIPLESGPFQVQHCRALLLLCLVSLGRDDWESAWLLVGFAVRVLLVVRTQLPPDDDRPRPRMRALLVACFIVDTIVSMRHNVPAHLKPDDIADLPLPEDGQDQWEPWTPCEGLGGEHTMLQMLRNPAYPLSTFNHLYGVTKLVALELLPRIRTSSQNAPLEFRSRLQQVIGHNSPFSVFVLSQDTASAFVPTAYLTRTVYLWAAAFSEPLNEHYSHLLIETLDQYQKRFGTYAIPPLIPSLLDSLLALKKQSHSSERHRRHLEELFPAYSSIWPRGGRHSNTGLQPIRQLELPPTATATASIMPHVMEQPLSTSINPVNDRFNGIPNPTPYNSDAALDAITQTNDYGSVNTHGILSTYPPPATHLNEASVALAPGGAPPRPPPPYVDSTTNHPPYHSNLVPMANFGYSTVDYDAMVDDLASIEYTDAVDVDPQFMTNLGFVPGCNFSDISTYEQ</sequence>
<keyword id="KW-0010">Activator</keyword>
<keyword id="KW-0238">DNA-binding</keyword>
<keyword id="KW-0479">Metal-binding</keyword>
<keyword id="KW-0539">Nucleus</keyword>
<keyword id="KW-0672">Quinate metabolism</keyword>
<keyword id="KW-1185">Reference proteome</keyword>
<keyword id="KW-0804">Transcription</keyword>
<keyword id="KW-0805">Transcription regulation</keyword>
<keyword id="KW-0862">Zinc</keyword>
<reference key="1">
    <citation type="journal article" date="1989" name="J. Mol. Biol.">
        <title>DNA sequence, organization and regulation of the qa gene cluster of Neurospora crassa.</title>
        <authorList>
            <person name="Geever R.F."/>
            <person name="Huiet L."/>
            <person name="Baum J.A."/>
            <person name="Tyler B.M."/>
            <person name="Patel V.B."/>
            <person name="Rutledge B.J."/>
            <person name="Case M.E."/>
            <person name="Giles N.H."/>
        </authorList>
    </citation>
    <scope>NUCLEOTIDE SEQUENCE [GENOMIC DNA]</scope>
    <scope>FUNCTION</scope>
    <source>
        <strain>ATCC 24698 / 74-OR23-1A / CBS 708.71 / DSM 1257 / FGSC 987</strain>
    </source>
</reference>
<reference key="2">
    <citation type="journal article" date="2003" name="Nature">
        <title>The genome sequence of the filamentous fungus Neurospora crassa.</title>
        <authorList>
            <person name="Galagan J.E."/>
            <person name="Calvo S.E."/>
            <person name="Borkovich K.A."/>
            <person name="Selker E.U."/>
            <person name="Read N.D."/>
            <person name="Jaffe D.B."/>
            <person name="FitzHugh W."/>
            <person name="Ma L.-J."/>
            <person name="Smirnov S."/>
            <person name="Purcell S."/>
            <person name="Rehman B."/>
            <person name="Elkins T."/>
            <person name="Engels R."/>
            <person name="Wang S."/>
            <person name="Nielsen C.B."/>
            <person name="Butler J."/>
            <person name="Endrizzi M."/>
            <person name="Qui D."/>
            <person name="Ianakiev P."/>
            <person name="Bell-Pedersen D."/>
            <person name="Nelson M.A."/>
            <person name="Werner-Washburne M."/>
            <person name="Selitrennikoff C.P."/>
            <person name="Kinsey J.A."/>
            <person name="Braun E.L."/>
            <person name="Zelter A."/>
            <person name="Schulte U."/>
            <person name="Kothe G.O."/>
            <person name="Jedd G."/>
            <person name="Mewes H.-W."/>
            <person name="Staben C."/>
            <person name="Marcotte E."/>
            <person name="Greenberg D."/>
            <person name="Roy A."/>
            <person name="Foley K."/>
            <person name="Naylor J."/>
            <person name="Stange-Thomann N."/>
            <person name="Barrett R."/>
            <person name="Gnerre S."/>
            <person name="Kamal M."/>
            <person name="Kamvysselis M."/>
            <person name="Mauceli E.W."/>
            <person name="Bielke C."/>
            <person name="Rudd S."/>
            <person name="Frishman D."/>
            <person name="Krystofova S."/>
            <person name="Rasmussen C."/>
            <person name="Metzenberg R.L."/>
            <person name="Perkins D.D."/>
            <person name="Kroken S."/>
            <person name="Cogoni C."/>
            <person name="Macino G."/>
            <person name="Catcheside D.E.A."/>
            <person name="Li W."/>
            <person name="Pratt R.J."/>
            <person name="Osmani S.A."/>
            <person name="DeSouza C.P.C."/>
            <person name="Glass N.L."/>
            <person name="Orbach M.J."/>
            <person name="Berglund J.A."/>
            <person name="Voelker R."/>
            <person name="Yarden O."/>
            <person name="Plamann M."/>
            <person name="Seiler S."/>
            <person name="Dunlap J.C."/>
            <person name="Radford A."/>
            <person name="Aramayo R."/>
            <person name="Natvig D.O."/>
            <person name="Alex L.A."/>
            <person name="Mannhaupt G."/>
            <person name="Ebbole D.J."/>
            <person name="Freitag M."/>
            <person name="Paulsen I."/>
            <person name="Sachs M.S."/>
            <person name="Lander E.S."/>
            <person name="Nusbaum C."/>
            <person name="Birren B.W."/>
        </authorList>
    </citation>
    <scope>NUCLEOTIDE SEQUENCE [LARGE SCALE GENOMIC DNA]</scope>
    <source>
        <strain>ATCC 24698 / 74-OR23-1A / CBS 708.71 / DSM 1257 / FGSC 987</strain>
    </source>
</reference>
<reference key="3">
    <citation type="journal article" date="1975" name="Proc. Natl. Acad. Sci. U.S.A.">
        <title>Genetic evidence on the organization and action of the qa-1 gene product: a protein regulating the induction of three enzymes in quinate catabolism in Neurospora crassa.</title>
        <authorList>
            <person name="Case M.E."/>
            <person name="Giles N.H."/>
        </authorList>
    </citation>
    <scope>FUNCTION</scope>
</reference>
<reference key="4">
    <citation type="journal article" date="1976" name="Mol. Gen. Genet.">
        <title>Gene order in the qa gene cluster of Neurospora crassa.</title>
        <authorList>
            <person name="Case M.E."/>
            <person name="Giles N.H."/>
        </authorList>
    </citation>
    <scope>IDENTIFICATION WITHIN THE QA CLUSTER</scope>
</reference>
<reference key="5">
    <citation type="journal article" date="1981" name="Proc. Natl. Acad. Sci. U.S.A.">
        <title>Genetic organization and transcriptional regulation in the qa gene cluster of Neurospora crassa.</title>
        <authorList>
            <person name="Patel V.B."/>
            <person name="Schweizer M."/>
            <person name="Dykstra C.C."/>
            <person name="Kushner S.R."/>
            <person name="Giles N.H."/>
        </authorList>
    </citation>
    <scope>FUNCTION</scope>
    <scope>INDUCTION</scope>
</reference>
<reference key="6">
    <citation type="journal article" date="1984" name="Cell">
        <title>Cis-acting and trans-acting regulatory mutations define two types of promoters controlled by the qa-1F gene of Neurospora.</title>
        <authorList>
            <person name="Tyler B.M."/>
            <person name="Geever R.F."/>
            <person name="Case M.E."/>
            <person name="Giles N.H."/>
        </authorList>
    </citation>
    <scope>FUNCTION</scope>
</reference>
<reference key="7">
    <citation type="journal article" date="1985" name="Mol. Cell. Biol.">
        <title>Autogenous regulation of the positive regulatory qa-1F gene in Neurospora crassa.</title>
        <authorList>
            <person name="Patel V.B."/>
            <person name="Giles N.H."/>
        </authorList>
    </citation>
    <scope>FUNCTION</scope>
    <scope>INDUCTION</scope>
</reference>
<reference key="8">
    <citation type="journal article" date="1987" name="Mol. Cell. Biol.">
        <title>Expression of qa-1F activator protein: identification of upstream binding sites in the qa gene cluster and localization of the DNA-binding domain.</title>
        <authorList>
            <person name="Baum J.A."/>
            <person name="Geever R."/>
            <person name="Giles N.H."/>
        </authorList>
    </citation>
    <scope>FUNCTION</scope>
    <scope>DNA-BINDING</scope>
    <scope>DOMAIN</scope>
    <scope>SUBCELLULAR LOCATION</scope>
</reference>
<reference key="9">
    <citation type="journal article" date="2002" name="Proc. Natl. Acad. Sci. U.S.A.">
        <title>An ensemble method for identifying regulatory circuits with special reference to the qa gene cluster of Neurospora crassa.</title>
        <authorList>
            <person name="Battogtokh D."/>
            <person name="Asch D.K."/>
            <person name="Case M.E."/>
            <person name="Arnold J."/>
            <person name="Schuttler H.B."/>
        </authorList>
    </citation>
    <scope>INDUCTION</scope>
</reference>
<reference key="10">
    <citation type="journal article" date="2007" name="Bioinformation">
        <title>Genome-wide expression analysis of genetic networks in Neurospora crassa.</title>
        <authorList>
            <person name="Logan D.A."/>
            <person name="Koch A.L."/>
            <person name="Dong W."/>
            <person name="Griffith J."/>
            <person name="Nilsen R."/>
            <person name="Case M.E."/>
            <person name="Schuettler H.B."/>
            <person name="Arnold J."/>
        </authorList>
    </citation>
    <scope>FUNCTION</scope>
    <scope>INDUCTION</scope>
</reference>
<reference key="11">
    <citation type="journal article" date="2011" name="PLoS ONE">
        <title>Systems biology of the qa gene cluster in Neurospora crassa.</title>
        <authorList>
            <person name="Tang X."/>
            <person name="Dong W."/>
            <person name="Griffith J."/>
            <person name="Nilsen R."/>
            <person name="Matthes A."/>
            <person name="Cheng K.B."/>
            <person name="Reeves J."/>
            <person name="Schuttler H.B."/>
            <person name="Case M.E."/>
            <person name="Arnold J."/>
            <person name="Logan D.A."/>
        </authorList>
    </citation>
    <scope>FUNCTION</scope>
</reference>
<feature type="chain" id="PRO_0000114969" description="Transcription factor qa-1f">
    <location>
        <begin position="1"/>
        <end position="816"/>
    </location>
</feature>
<feature type="DNA-binding region" description="Zn(2)-C6 fungal-type" evidence="1 9">
    <location>
        <begin position="76"/>
        <end position="103"/>
    </location>
</feature>
<feature type="region of interest" description="Disordered" evidence="2">
    <location>
        <begin position="184"/>
        <end position="235"/>
    </location>
</feature>
<feature type="compositionally biased region" description="Polar residues" evidence="2">
    <location>
        <begin position="184"/>
        <end position="202"/>
    </location>
</feature>
<feature type="sequence conflict" description="In Ref. 1; CAA32754." evidence="13" ref="1">
    <original>S</original>
    <variation>N</variation>
    <location>
        <position position="812"/>
    </location>
</feature>
<proteinExistence type="evidence at protein level"/>
<protein>
    <recommendedName>
        <fullName evidence="12">Transcription factor qa-1f</fullName>
    </recommendedName>
    <alternativeName>
        <fullName evidence="12">Quinic acid degradation cluster protein 1f</fullName>
    </alternativeName>
    <alternativeName>
        <fullName evidence="12">Quinic acid utilization activator qa-1f</fullName>
    </alternativeName>
</protein>
<evidence type="ECO:0000255" key="1">
    <source>
        <dbReference type="PROSITE-ProRule" id="PRU00227"/>
    </source>
</evidence>
<evidence type="ECO:0000256" key="2">
    <source>
        <dbReference type="SAM" id="MobiDB-lite"/>
    </source>
</evidence>
<evidence type="ECO:0000269" key="3">
    <source>
    </source>
</evidence>
<evidence type="ECO:0000269" key="4">
    <source>
    </source>
</evidence>
<evidence type="ECO:0000269" key="5">
    <source>
    </source>
</evidence>
<evidence type="ECO:0000269" key="6">
    <source>
    </source>
</evidence>
<evidence type="ECO:0000269" key="7">
    <source>
    </source>
</evidence>
<evidence type="ECO:0000269" key="8">
    <source>
    </source>
</evidence>
<evidence type="ECO:0000269" key="9">
    <source>
    </source>
</evidence>
<evidence type="ECO:0000269" key="10">
    <source>
    </source>
</evidence>
<evidence type="ECO:0000269" key="11">
    <source>
    </source>
</evidence>
<evidence type="ECO:0000303" key="12">
    <source>
    </source>
</evidence>
<evidence type="ECO:0000305" key="13"/>
<dbReference type="EMBL" id="X14603">
    <property type="protein sequence ID" value="CAA32754.1"/>
    <property type="molecule type" value="Genomic_DNA"/>
</dbReference>
<dbReference type="EMBL" id="CM002242">
    <property type="protein sequence ID" value="EAA30382.1"/>
    <property type="molecule type" value="Genomic_DNA"/>
</dbReference>
<dbReference type="PIR" id="S04256">
    <property type="entry name" value="F31277"/>
</dbReference>
<dbReference type="RefSeq" id="XP_959618.1">
    <property type="nucleotide sequence ID" value="XM_954525.2"/>
</dbReference>
<dbReference type="STRING" id="367110.P11638"/>
<dbReference type="PaxDb" id="5141-EFNCRP00000005354"/>
<dbReference type="EnsemblFungi" id="EAA30382">
    <property type="protein sequence ID" value="EAA30382"/>
    <property type="gene ID" value="NCU06028"/>
</dbReference>
<dbReference type="GeneID" id="3875756"/>
<dbReference type="KEGG" id="ncr:NCU06028"/>
<dbReference type="VEuPathDB" id="FungiDB:NCU06028"/>
<dbReference type="HOGENOM" id="CLU_007607_0_0_1"/>
<dbReference type="InParanoid" id="P11638"/>
<dbReference type="OMA" id="WLPICEK"/>
<dbReference type="OrthoDB" id="3364175at2759"/>
<dbReference type="Proteomes" id="UP000001805">
    <property type="component" value="Chromosome 7, Linkage Group VII"/>
</dbReference>
<dbReference type="GO" id="GO:0005634">
    <property type="term" value="C:nucleus"/>
    <property type="evidence" value="ECO:0007669"/>
    <property type="project" value="UniProtKB-SubCell"/>
</dbReference>
<dbReference type="GO" id="GO:0003677">
    <property type="term" value="F:DNA binding"/>
    <property type="evidence" value="ECO:0007669"/>
    <property type="project" value="UniProtKB-KW"/>
</dbReference>
<dbReference type="GO" id="GO:0003700">
    <property type="term" value="F:DNA-binding transcription factor activity"/>
    <property type="evidence" value="ECO:0000318"/>
    <property type="project" value="GO_Central"/>
</dbReference>
<dbReference type="GO" id="GO:0000981">
    <property type="term" value="F:DNA-binding transcription factor activity, RNA polymerase II-specific"/>
    <property type="evidence" value="ECO:0007669"/>
    <property type="project" value="InterPro"/>
</dbReference>
<dbReference type="GO" id="GO:0008270">
    <property type="term" value="F:zinc ion binding"/>
    <property type="evidence" value="ECO:0007669"/>
    <property type="project" value="InterPro"/>
</dbReference>
<dbReference type="GO" id="GO:0006351">
    <property type="term" value="P:DNA-templated transcription"/>
    <property type="evidence" value="ECO:0007669"/>
    <property type="project" value="InterPro"/>
</dbReference>
<dbReference type="GO" id="GO:0045944">
    <property type="term" value="P:positive regulation of transcription by RNA polymerase II"/>
    <property type="evidence" value="ECO:0000318"/>
    <property type="project" value="GO_Central"/>
</dbReference>
<dbReference type="GO" id="GO:0019630">
    <property type="term" value="P:quinate metabolic process"/>
    <property type="evidence" value="ECO:0007669"/>
    <property type="project" value="UniProtKB-KW"/>
</dbReference>
<dbReference type="CDD" id="cd12148">
    <property type="entry name" value="fungal_TF_MHR"/>
    <property type="match status" value="1"/>
</dbReference>
<dbReference type="CDD" id="cd00067">
    <property type="entry name" value="GAL4"/>
    <property type="match status" value="1"/>
</dbReference>
<dbReference type="FunFam" id="4.10.240.10:FF:000005">
    <property type="entry name" value="Quinic acid utilization activator"/>
    <property type="match status" value="1"/>
</dbReference>
<dbReference type="Gene3D" id="4.10.240.10">
    <property type="entry name" value="Zn(2)-C6 fungal-type DNA-binding domain"/>
    <property type="match status" value="1"/>
</dbReference>
<dbReference type="InterPro" id="IPR052783">
    <property type="entry name" value="Metabolic/Drug-Res_Regulator"/>
</dbReference>
<dbReference type="InterPro" id="IPR007219">
    <property type="entry name" value="Transcription_factor_dom_fun"/>
</dbReference>
<dbReference type="InterPro" id="IPR036864">
    <property type="entry name" value="Zn2-C6_fun-type_DNA-bd_sf"/>
</dbReference>
<dbReference type="InterPro" id="IPR001138">
    <property type="entry name" value="Zn2Cys6_DnaBD"/>
</dbReference>
<dbReference type="PANTHER" id="PTHR47655">
    <property type="entry name" value="QUINIC ACID UTILIZATION ACTIVATOR"/>
    <property type="match status" value="1"/>
</dbReference>
<dbReference type="PANTHER" id="PTHR47655:SF2">
    <property type="entry name" value="QUINIC ACID UTILIZATION ACTIVATOR"/>
    <property type="match status" value="1"/>
</dbReference>
<dbReference type="Pfam" id="PF04082">
    <property type="entry name" value="Fungal_trans"/>
    <property type="match status" value="1"/>
</dbReference>
<dbReference type="Pfam" id="PF00172">
    <property type="entry name" value="Zn_clus"/>
    <property type="match status" value="1"/>
</dbReference>
<dbReference type="SMART" id="SM00906">
    <property type="entry name" value="Fungal_trans"/>
    <property type="match status" value="1"/>
</dbReference>
<dbReference type="SMART" id="SM00066">
    <property type="entry name" value="GAL4"/>
    <property type="match status" value="1"/>
</dbReference>
<dbReference type="SUPFAM" id="SSF57701">
    <property type="entry name" value="Zn2/Cys6 DNA-binding domain"/>
    <property type="match status" value="1"/>
</dbReference>
<dbReference type="PROSITE" id="PS00463">
    <property type="entry name" value="ZN2_CY6_FUNGAL_1"/>
    <property type="match status" value="1"/>
</dbReference>
<dbReference type="PROSITE" id="PS50048">
    <property type="entry name" value="ZN2_CY6_FUNGAL_2"/>
    <property type="match status" value="1"/>
</dbReference>
<name>QA1F_NEUCR</name>
<organism>
    <name type="scientific">Neurospora crassa (strain ATCC 24698 / 74-OR23-1A / CBS 708.71 / DSM 1257 / FGSC 987)</name>
    <dbReference type="NCBI Taxonomy" id="367110"/>
    <lineage>
        <taxon>Eukaryota</taxon>
        <taxon>Fungi</taxon>
        <taxon>Dikarya</taxon>
        <taxon>Ascomycota</taxon>
        <taxon>Pezizomycotina</taxon>
        <taxon>Sordariomycetes</taxon>
        <taxon>Sordariomycetidae</taxon>
        <taxon>Sordariales</taxon>
        <taxon>Sordariaceae</taxon>
        <taxon>Neurospora</taxon>
    </lineage>
</organism>
<accession>P11638</accession>
<accession>Q7RV98</accession>
<gene>
    <name evidence="12" type="primary">qa-1f</name>
    <name type="ORF">NCU06028</name>
</gene>